<gene>
    <name evidence="1" type="primary">nusB</name>
    <name type="ordered locus">CT_832</name>
</gene>
<name>NUSB_CHLTR</name>
<feature type="chain" id="PRO_0000176527" description="Transcription antitermination protein NusB">
    <location>
        <begin position="1"/>
        <end position="168"/>
    </location>
</feature>
<evidence type="ECO:0000255" key="1">
    <source>
        <dbReference type="HAMAP-Rule" id="MF_00073"/>
    </source>
</evidence>
<evidence type="ECO:0000305" key="2"/>
<dbReference type="EMBL" id="AE001273">
    <property type="protein sequence ID" value="AAC68429.1"/>
    <property type="molecule type" value="Genomic_DNA"/>
</dbReference>
<dbReference type="PIR" id="H71464">
    <property type="entry name" value="H71464"/>
</dbReference>
<dbReference type="RefSeq" id="NP_220353.1">
    <property type="nucleotide sequence ID" value="NC_000117.1"/>
</dbReference>
<dbReference type="RefSeq" id="WP_010725361.1">
    <property type="nucleotide sequence ID" value="NC_000117.1"/>
</dbReference>
<dbReference type="SMR" id="O84839"/>
<dbReference type="STRING" id="272561.CT_832"/>
<dbReference type="EnsemblBacteria" id="AAC68429">
    <property type="protein sequence ID" value="AAC68429"/>
    <property type="gene ID" value="CT_832"/>
</dbReference>
<dbReference type="GeneID" id="884632"/>
<dbReference type="KEGG" id="ctr:CT_832"/>
<dbReference type="PATRIC" id="fig|272561.5.peg.918"/>
<dbReference type="HOGENOM" id="CLU_087843_3_3_0"/>
<dbReference type="InParanoid" id="O84839"/>
<dbReference type="OrthoDB" id="9811381at2"/>
<dbReference type="Proteomes" id="UP000000431">
    <property type="component" value="Chromosome"/>
</dbReference>
<dbReference type="GO" id="GO:0005829">
    <property type="term" value="C:cytosol"/>
    <property type="evidence" value="ECO:0000318"/>
    <property type="project" value="GO_Central"/>
</dbReference>
<dbReference type="GO" id="GO:0003723">
    <property type="term" value="F:RNA binding"/>
    <property type="evidence" value="ECO:0007669"/>
    <property type="project" value="UniProtKB-UniRule"/>
</dbReference>
<dbReference type="GO" id="GO:0006353">
    <property type="term" value="P:DNA-templated transcription termination"/>
    <property type="evidence" value="ECO:0007669"/>
    <property type="project" value="UniProtKB-UniRule"/>
</dbReference>
<dbReference type="GO" id="GO:0031564">
    <property type="term" value="P:transcription antitermination"/>
    <property type="evidence" value="ECO:0007669"/>
    <property type="project" value="UniProtKB-KW"/>
</dbReference>
<dbReference type="CDD" id="cd00619">
    <property type="entry name" value="Terminator_NusB"/>
    <property type="match status" value="1"/>
</dbReference>
<dbReference type="Gene3D" id="1.10.940.10">
    <property type="entry name" value="NusB-like"/>
    <property type="match status" value="1"/>
</dbReference>
<dbReference type="HAMAP" id="MF_00073">
    <property type="entry name" value="NusB"/>
    <property type="match status" value="1"/>
</dbReference>
<dbReference type="InterPro" id="IPR035926">
    <property type="entry name" value="NusB-like_sf"/>
</dbReference>
<dbReference type="InterPro" id="IPR011605">
    <property type="entry name" value="NusB_fam"/>
</dbReference>
<dbReference type="InterPro" id="IPR006027">
    <property type="entry name" value="NusB_RsmB_TIM44"/>
</dbReference>
<dbReference type="NCBIfam" id="TIGR01951">
    <property type="entry name" value="nusB"/>
    <property type="match status" value="1"/>
</dbReference>
<dbReference type="NCBIfam" id="NF001230">
    <property type="entry name" value="PRK00202.2-5"/>
    <property type="match status" value="1"/>
</dbReference>
<dbReference type="PANTHER" id="PTHR11078:SF3">
    <property type="entry name" value="ANTITERMINATION NUSB DOMAIN-CONTAINING PROTEIN"/>
    <property type="match status" value="1"/>
</dbReference>
<dbReference type="PANTHER" id="PTHR11078">
    <property type="entry name" value="N UTILIZATION SUBSTANCE PROTEIN B-RELATED"/>
    <property type="match status" value="1"/>
</dbReference>
<dbReference type="Pfam" id="PF01029">
    <property type="entry name" value="NusB"/>
    <property type="match status" value="1"/>
</dbReference>
<dbReference type="SUPFAM" id="SSF48013">
    <property type="entry name" value="NusB-like"/>
    <property type="match status" value="1"/>
</dbReference>
<protein>
    <recommendedName>
        <fullName evidence="1">Transcription antitermination protein NusB</fullName>
    </recommendedName>
    <alternativeName>
        <fullName evidence="1">Antitermination factor NusB</fullName>
    </alternativeName>
</protein>
<comment type="function">
    <text evidence="1">Involved in transcription antitermination. Required for transcription of ribosomal RNA (rRNA) genes. Binds specifically to the boxA antiterminator sequence of the ribosomal RNA (rrn) operons.</text>
</comment>
<comment type="similarity">
    <text evidence="1 2">Belongs to the NusB family.</text>
</comment>
<proteinExistence type="inferred from homology"/>
<keyword id="KW-1185">Reference proteome</keyword>
<keyword id="KW-0694">RNA-binding</keyword>
<keyword id="KW-0804">Transcription</keyword>
<keyword id="KW-0889">Transcription antitermination</keyword>
<keyword id="KW-0805">Transcription regulation</keyword>
<accession>O84839</accession>
<reference key="1">
    <citation type="journal article" date="1998" name="Science">
        <title>Genome sequence of an obligate intracellular pathogen of humans: Chlamydia trachomatis.</title>
        <authorList>
            <person name="Stephens R.S."/>
            <person name="Kalman S."/>
            <person name="Lammel C.J."/>
            <person name="Fan J."/>
            <person name="Marathe R."/>
            <person name="Aravind L."/>
            <person name="Mitchell W.P."/>
            <person name="Olinger L."/>
            <person name="Tatusov R.L."/>
            <person name="Zhao Q."/>
            <person name="Koonin E.V."/>
            <person name="Davis R.W."/>
        </authorList>
    </citation>
    <scope>NUCLEOTIDE SEQUENCE [LARGE SCALE GENOMIC DNA]</scope>
    <source>
        <strain>ATCC VR-885 / DSM 19411 / UW-3/Cx</strain>
    </source>
</reference>
<organism>
    <name type="scientific">Chlamydia trachomatis serovar D (strain ATCC VR-885 / DSM 19411 / UW-3/Cx)</name>
    <dbReference type="NCBI Taxonomy" id="272561"/>
    <lineage>
        <taxon>Bacteria</taxon>
        <taxon>Pseudomonadati</taxon>
        <taxon>Chlamydiota</taxon>
        <taxon>Chlamydiia</taxon>
        <taxon>Chlamydiales</taxon>
        <taxon>Chlamydiaceae</taxon>
        <taxon>Chlamydia/Chlamydophila group</taxon>
        <taxon>Chlamydia</taxon>
    </lineage>
</organism>
<sequence>MSVMASDKACAPVRASRPFPKQKLRELVLQALYALEIDPEGEDSLVSLLMTEASVSKKNAAYALMFCRAIRANQPDLDALLDATIRTTTLARLTIIERNILRMMLFEHQQNQDCCPVPVAVLIAETTRLIKKFSYSEGSSLILAVLGSIFDHPAPALDAPLEPTSMCG</sequence>